<proteinExistence type="inferred from homology"/>
<accession>Q4ZWQ1</accession>
<organism>
    <name type="scientific">Pseudomonas syringae pv. syringae (strain B728a)</name>
    <dbReference type="NCBI Taxonomy" id="205918"/>
    <lineage>
        <taxon>Bacteria</taxon>
        <taxon>Pseudomonadati</taxon>
        <taxon>Pseudomonadota</taxon>
        <taxon>Gammaproteobacteria</taxon>
        <taxon>Pseudomonadales</taxon>
        <taxon>Pseudomonadaceae</taxon>
        <taxon>Pseudomonas</taxon>
        <taxon>Pseudomonas syringae</taxon>
    </lineage>
</organism>
<feature type="chain" id="PRO_0000230148" description="tRNA pseudouridine synthase D">
    <location>
        <begin position="1"/>
        <end position="352"/>
    </location>
</feature>
<feature type="domain" description="TRUD" evidence="1">
    <location>
        <begin position="157"/>
        <end position="303"/>
    </location>
</feature>
<feature type="active site" description="Nucleophile" evidence="1">
    <location>
        <position position="81"/>
    </location>
</feature>
<reference key="1">
    <citation type="journal article" date="2005" name="Proc. Natl. Acad. Sci. U.S.A.">
        <title>Comparison of the complete genome sequences of Pseudomonas syringae pv. syringae B728a and pv. tomato DC3000.</title>
        <authorList>
            <person name="Feil H."/>
            <person name="Feil W.S."/>
            <person name="Chain P."/>
            <person name="Larimer F."/>
            <person name="Dibartolo G."/>
            <person name="Copeland A."/>
            <person name="Lykidis A."/>
            <person name="Trong S."/>
            <person name="Nolan M."/>
            <person name="Goltsman E."/>
            <person name="Thiel J."/>
            <person name="Malfatti S."/>
            <person name="Loper J.E."/>
            <person name="Lapidus A."/>
            <person name="Detter J.C."/>
            <person name="Land M."/>
            <person name="Richardson P.M."/>
            <person name="Kyrpides N.C."/>
            <person name="Ivanova N."/>
            <person name="Lindow S.E."/>
        </authorList>
    </citation>
    <scope>NUCLEOTIDE SEQUENCE [LARGE SCALE GENOMIC DNA]</scope>
    <source>
        <strain>B728a</strain>
    </source>
</reference>
<dbReference type="EC" id="5.4.99.27" evidence="1"/>
<dbReference type="EMBL" id="CP000075">
    <property type="protein sequence ID" value="AAY36421.1"/>
    <property type="molecule type" value="Genomic_DNA"/>
</dbReference>
<dbReference type="RefSeq" id="WP_011266986.1">
    <property type="nucleotide sequence ID" value="NC_007005.1"/>
</dbReference>
<dbReference type="RefSeq" id="YP_234459.1">
    <property type="nucleotide sequence ID" value="NC_007005.1"/>
</dbReference>
<dbReference type="SMR" id="Q4ZWQ1"/>
<dbReference type="STRING" id="205918.Psyr_1370"/>
<dbReference type="KEGG" id="psb:Psyr_1370"/>
<dbReference type="PATRIC" id="fig|205918.7.peg.1403"/>
<dbReference type="eggNOG" id="COG0585">
    <property type="taxonomic scope" value="Bacteria"/>
</dbReference>
<dbReference type="HOGENOM" id="CLU_005281_4_0_6"/>
<dbReference type="OrthoDB" id="1550679at2"/>
<dbReference type="Proteomes" id="UP000000426">
    <property type="component" value="Chromosome"/>
</dbReference>
<dbReference type="GO" id="GO:0005829">
    <property type="term" value="C:cytosol"/>
    <property type="evidence" value="ECO:0007669"/>
    <property type="project" value="TreeGrafter"/>
</dbReference>
<dbReference type="GO" id="GO:0003723">
    <property type="term" value="F:RNA binding"/>
    <property type="evidence" value="ECO:0007669"/>
    <property type="project" value="InterPro"/>
</dbReference>
<dbReference type="GO" id="GO:0160150">
    <property type="term" value="F:tRNA pseudouridine(13) synthase activity"/>
    <property type="evidence" value="ECO:0007669"/>
    <property type="project" value="UniProtKB-EC"/>
</dbReference>
<dbReference type="GO" id="GO:0031119">
    <property type="term" value="P:tRNA pseudouridine synthesis"/>
    <property type="evidence" value="ECO:0007669"/>
    <property type="project" value="UniProtKB-UniRule"/>
</dbReference>
<dbReference type="CDD" id="cd02575">
    <property type="entry name" value="PseudoU_synth_EcTruD"/>
    <property type="match status" value="1"/>
</dbReference>
<dbReference type="Gene3D" id="3.30.2350.20">
    <property type="entry name" value="TruD, catalytic domain"/>
    <property type="match status" value="1"/>
</dbReference>
<dbReference type="Gene3D" id="3.30.2340.10">
    <property type="entry name" value="TruD, insertion domain"/>
    <property type="match status" value="1"/>
</dbReference>
<dbReference type="HAMAP" id="MF_01082">
    <property type="entry name" value="TruD"/>
    <property type="match status" value="1"/>
</dbReference>
<dbReference type="InterPro" id="IPR020103">
    <property type="entry name" value="PsdUridine_synth_cat_dom_sf"/>
</dbReference>
<dbReference type="InterPro" id="IPR001656">
    <property type="entry name" value="PsdUridine_synth_TruD"/>
</dbReference>
<dbReference type="InterPro" id="IPR020119">
    <property type="entry name" value="PsdUridine_synth_TruD_CS"/>
</dbReference>
<dbReference type="InterPro" id="IPR011760">
    <property type="entry name" value="PsdUridine_synth_TruD_insert"/>
</dbReference>
<dbReference type="InterPro" id="IPR042214">
    <property type="entry name" value="TruD_catalytic"/>
</dbReference>
<dbReference type="InterPro" id="IPR043165">
    <property type="entry name" value="TruD_insert_sf"/>
</dbReference>
<dbReference type="InterPro" id="IPR050170">
    <property type="entry name" value="TruD_pseudoU_synthase"/>
</dbReference>
<dbReference type="NCBIfam" id="NF002153">
    <property type="entry name" value="PRK00984.1-2"/>
    <property type="match status" value="1"/>
</dbReference>
<dbReference type="PANTHER" id="PTHR47811">
    <property type="entry name" value="TRNA PSEUDOURIDINE SYNTHASE D"/>
    <property type="match status" value="1"/>
</dbReference>
<dbReference type="PANTHER" id="PTHR47811:SF1">
    <property type="entry name" value="TRNA PSEUDOURIDINE SYNTHASE D"/>
    <property type="match status" value="1"/>
</dbReference>
<dbReference type="Pfam" id="PF01142">
    <property type="entry name" value="TruD"/>
    <property type="match status" value="2"/>
</dbReference>
<dbReference type="SUPFAM" id="SSF55120">
    <property type="entry name" value="Pseudouridine synthase"/>
    <property type="match status" value="1"/>
</dbReference>
<dbReference type="PROSITE" id="PS50984">
    <property type="entry name" value="TRUD"/>
    <property type="match status" value="1"/>
</dbReference>
<dbReference type="PROSITE" id="PS01268">
    <property type="entry name" value="UPF0024"/>
    <property type="match status" value="1"/>
</dbReference>
<gene>
    <name evidence="1" type="primary">truD</name>
    <name type="ordered locus">Psyr_1370</name>
</gene>
<sequence length="352" mass="38875">MNELELLGPRAYGEALGRAVLKATAEDFQVDEVLDIPLSGDGEHLWLWVEKRGLNTEEAARRLARAAGVQLRTVSYAGLKDRQALTRQWFSIQLPGKADPDLSAAQDDTLQILKSGRHKRKLQRGAHAANGFTLRLTQLDADKDALNQRLETIARQGIPNYFGAQRFGYQGGNLGEARDYAARKALPEQRAVRSRLLSTARSYLFNRVLAARVADGSWQKAQVGDLLAFTDSRSFFPAGVDECSDPRLAILDLHPTGPQWGEGPSPAGGATAALENTVADDESVLRDWLVRAGMEHERRILRLPIGRLTWHYPESDILQLEFVLPPGCFATVLVRELIDLVPVGQTDSSCVF</sequence>
<protein>
    <recommendedName>
        <fullName evidence="1">tRNA pseudouridine synthase D</fullName>
        <ecNumber evidence="1">5.4.99.27</ecNumber>
    </recommendedName>
    <alternativeName>
        <fullName evidence="1">tRNA pseudouridine(13) synthase</fullName>
    </alternativeName>
    <alternativeName>
        <fullName evidence="1">tRNA pseudouridylate synthase D</fullName>
    </alternativeName>
    <alternativeName>
        <fullName evidence="1">tRNA-uridine isomerase D</fullName>
    </alternativeName>
</protein>
<keyword id="KW-0413">Isomerase</keyword>
<keyword id="KW-0819">tRNA processing</keyword>
<comment type="function">
    <text evidence="1">Responsible for synthesis of pseudouridine from uracil-13 in transfer RNAs.</text>
</comment>
<comment type="catalytic activity">
    <reaction evidence="1">
        <text>uridine(13) in tRNA = pseudouridine(13) in tRNA</text>
        <dbReference type="Rhea" id="RHEA:42540"/>
        <dbReference type="Rhea" id="RHEA-COMP:10105"/>
        <dbReference type="Rhea" id="RHEA-COMP:10106"/>
        <dbReference type="ChEBI" id="CHEBI:65314"/>
        <dbReference type="ChEBI" id="CHEBI:65315"/>
        <dbReference type="EC" id="5.4.99.27"/>
    </reaction>
</comment>
<comment type="similarity">
    <text evidence="1">Belongs to the pseudouridine synthase TruD family.</text>
</comment>
<name>TRUD_PSEU2</name>
<evidence type="ECO:0000255" key="1">
    <source>
        <dbReference type="HAMAP-Rule" id="MF_01082"/>
    </source>
</evidence>